<protein>
    <recommendedName>
        <fullName>UPF0479 membrane protein YER190C-B</fullName>
    </recommendedName>
</protein>
<evidence type="ECO:0000255" key="1"/>
<evidence type="ECO:0000305" key="2"/>
<name>YE190_YEAST</name>
<sequence length="160" mass="18602">MMPAKLQLDVLRTLQSSARHGTQTLKNSNFLERFHKDRIVFCLPFFPALFFVPVQKVLQHLCLRFTQVAPYFIIQLFDLPSRHAENLAPLLASCRIQYTNCFSSSSNGQVPSIISLYLRVDLSPFYAKIFQISYRVPMIWLDVFQVFFVFLVISQHSLHS</sequence>
<dbReference type="EMBL" id="U34775">
    <property type="status" value="NOT_ANNOTATED_CDS"/>
    <property type="molecule type" value="Genomic_DNA"/>
</dbReference>
<dbReference type="EMBL" id="U18922">
    <property type="status" value="NOT_ANNOTATED_CDS"/>
    <property type="molecule type" value="Genomic_DNA"/>
</dbReference>
<dbReference type="EMBL" id="AF479992">
    <property type="protein sequence ID" value="AAL79305.1"/>
    <property type="molecule type" value="Genomic_DNA"/>
</dbReference>
<dbReference type="EMBL" id="BK006939">
    <property type="protein sequence ID" value="DAA07854.1"/>
    <property type="molecule type" value="Genomic_DNA"/>
</dbReference>
<dbReference type="RefSeq" id="NP_001073292.1">
    <property type="nucleotide sequence ID" value="NM_001184590.1"/>
</dbReference>
<dbReference type="FunCoup" id="P0CX94">
    <property type="interactions" value="3"/>
</dbReference>
<dbReference type="EnsemblFungi" id="YER190C-B_mRNA">
    <property type="protein sequence ID" value="YER190C-B"/>
    <property type="gene ID" value="YER190C-B"/>
</dbReference>
<dbReference type="EnsemblFungi" id="YGR296C-B_mRNA">
    <property type="protein sequence ID" value="YGR296C-B"/>
    <property type="gene ID" value="YGR296C-B"/>
</dbReference>
<dbReference type="EnsemblFungi" id="YPL283W-B_mRNA">
    <property type="protein sequence ID" value="YPL283W-B"/>
    <property type="gene ID" value="YPL283W-B"/>
</dbReference>
<dbReference type="EnsemblFungi" id="YPR204C-A_mRNA">
    <property type="protein sequence ID" value="YPR204C-A"/>
    <property type="gene ID" value="YPR204C-A"/>
</dbReference>
<dbReference type="GeneID" id="4594642"/>
<dbReference type="KEGG" id="sce:YER190C-B"/>
<dbReference type="AGR" id="SGD:S000028627"/>
<dbReference type="SGD" id="S000028627">
    <property type="gene designation" value="YER190C-B"/>
</dbReference>
<dbReference type="VEuPathDB" id="FungiDB:YER190C-B"/>
<dbReference type="HOGENOM" id="CLU_139933_0_0_1"/>
<dbReference type="InParanoid" id="P0CX94"/>
<dbReference type="BioCyc" id="YEAST:G3O-30396-MONOMER"/>
<dbReference type="PRO" id="PR:P0CX94"/>
<dbReference type="Proteomes" id="UP000002311">
    <property type="component" value="Chromosome V"/>
</dbReference>
<dbReference type="RNAct" id="P0CX94">
    <property type="molecule type" value="protein"/>
</dbReference>
<dbReference type="GO" id="GO:0016020">
    <property type="term" value="C:membrane"/>
    <property type="evidence" value="ECO:0007669"/>
    <property type="project" value="UniProtKB-SubCell"/>
</dbReference>
<keyword id="KW-0472">Membrane</keyword>
<keyword id="KW-1185">Reference proteome</keyword>
<keyword id="KW-0812">Transmembrane</keyword>
<keyword id="KW-1133">Transmembrane helix</keyword>
<proteinExistence type="inferred from homology"/>
<comment type="subcellular location">
    <subcellularLocation>
        <location evidence="2">Membrane</location>
        <topology evidence="2">Multi-pass membrane protein</topology>
    </subcellularLocation>
</comment>
<comment type="similarity">
    <text evidence="2">Belongs to the UPF0479 family.</text>
</comment>
<feature type="chain" id="PRO_0000277622" description="UPF0479 membrane protein YER190C-B">
    <location>
        <begin position="1"/>
        <end position="160"/>
    </location>
</feature>
<feature type="transmembrane region" description="Helical" evidence="1">
    <location>
        <begin position="39"/>
        <end position="59"/>
    </location>
</feature>
<feature type="transmembrane region" description="Helical" evidence="1">
    <location>
        <begin position="136"/>
        <end position="156"/>
    </location>
</feature>
<organism>
    <name type="scientific">Saccharomyces cerevisiae (strain ATCC 204508 / S288c)</name>
    <name type="common">Baker's yeast</name>
    <dbReference type="NCBI Taxonomy" id="559292"/>
    <lineage>
        <taxon>Eukaryota</taxon>
        <taxon>Fungi</taxon>
        <taxon>Dikarya</taxon>
        <taxon>Ascomycota</taxon>
        <taxon>Saccharomycotina</taxon>
        <taxon>Saccharomycetes</taxon>
        <taxon>Saccharomycetales</taxon>
        <taxon>Saccharomycetaceae</taxon>
        <taxon>Saccharomyces</taxon>
    </lineage>
</organism>
<gene>
    <name type="ordered locus">YER190C-B</name>
</gene>
<reference key="1">
    <citation type="journal article" date="1997" name="Nature">
        <title>The nucleotide sequence of Saccharomyces cerevisiae chromosome V.</title>
        <authorList>
            <person name="Dietrich F.S."/>
            <person name="Mulligan J.T."/>
            <person name="Hennessy K.M."/>
            <person name="Yelton M.A."/>
            <person name="Allen E."/>
            <person name="Araujo R."/>
            <person name="Aviles E."/>
            <person name="Berno A."/>
            <person name="Brennan T."/>
            <person name="Carpenter J."/>
            <person name="Chen E."/>
            <person name="Cherry J.M."/>
            <person name="Chung E."/>
            <person name="Duncan M."/>
            <person name="Guzman E."/>
            <person name="Hartzell G."/>
            <person name="Hunicke-Smith S."/>
            <person name="Hyman R.W."/>
            <person name="Kayser A."/>
            <person name="Komp C."/>
            <person name="Lashkari D."/>
            <person name="Lew H."/>
            <person name="Lin D."/>
            <person name="Mosedale D."/>
            <person name="Nakahara K."/>
            <person name="Namath A."/>
            <person name="Norgren R."/>
            <person name="Oefner P."/>
            <person name="Oh C."/>
            <person name="Petel F.X."/>
            <person name="Roberts D."/>
            <person name="Sehl P."/>
            <person name="Schramm S."/>
            <person name="Shogren T."/>
            <person name="Smith V."/>
            <person name="Taylor P."/>
            <person name="Wei Y."/>
            <person name="Botstein D."/>
            <person name="Davis R.W."/>
        </authorList>
    </citation>
    <scope>NUCLEOTIDE SEQUENCE [LARGE SCALE GENOMIC DNA]</scope>
    <source>
        <strain>ATCC 204508 / S288c</strain>
    </source>
</reference>
<reference key="2">
    <citation type="journal article" date="2014" name="G3 (Bethesda)">
        <title>The reference genome sequence of Saccharomyces cerevisiae: Then and now.</title>
        <authorList>
            <person name="Engel S.R."/>
            <person name="Dietrich F.S."/>
            <person name="Fisk D.G."/>
            <person name="Binkley G."/>
            <person name="Balakrishnan R."/>
            <person name="Costanzo M.C."/>
            <person name="Dwight S.S."/>
            <person name="Hitz B.C."/>
            <person name="Karra K."/>
            <person name="Nash R.S."/>
            <person name="Weng S."/>
            <person name="Wong E.D."/>
            <person name="Lloyd P."/>
            <person name="Skrzypek M.S."/>
            <person name="Miyasato S.R."/>
            <person name="Simison M."/>
            <person name="Cherry J.M."/>
        </authorList>
    </citation>
    <scope>GENOME REANNOTATION</scope>
    <source>
        <strain>ATCC 204508 / S288c</strain>
    </source>
</reference>
<reference key="3">
    <citation type="journal article" date="2002" name="Nat. Biotechnol.">
        <title>An integrated approach for finding overlooked genes in yeast.</title>
        <authorList>
            <person name="Kumar A."/>
            <person name="Harrison P.M."/>
            <person name="Cheung K.-H."/>
            <person name="Lan N."/>
            <person name="Echols N."/>
            <person name="Bertone P."/>
            <person name="Miller P."/>
            <person name="Gerstein M.B."/>
            <person name="Snyder M."/>
        </authorList>
    </citation>
    <scope>NUCLEOTIDE SEQUENCE [GENOMIC DNA]</scope>
</reference>
<accession>P0CX94</accession>
<accession>D3DMA0</accession>
<accession>Q8TFA4</accession>